<comment type="function">
    <text evidence="1">Essential component of the cytosolic iron-sulfur (Fe/S) protein assembly machinery. Required for the maturation of extramitochondrial Fe/S proteins.</text>
</comment>
<comment type="interaction">
    <interactant intactId="EBI-175932">
        <id>Q7K1Y4</id>
    </interactant>
    <interactant intactId="EBI-100085">
        <id>Q9VTC4</id>
        <label>galla-2</label>
    </interactant>
    <organismsDiffer>false</organismsDiffer>
    <experiments>4</experiments>
</comment>
<comment type="PTM">
    <text evidence="2">Conjugated to URM1, a ubiquitin-like protein.</text>
</comment>
<comment type="similarity">
    <text evidence="1">Belongs to the WD repeat CIA1 family.</text>
</comment>
<organism>
    <name type="scientific">Drosophila melanogaster</name>
    <name type="common">Fruit fly</name>
    <dbReference type="NCBI Taxonomy" id="7227"/>
    <lineage>
        <taxon>Eukaryota</taxon>
        <taxon>Metazoa</taxon>
        <taxon>Ecdysozoa</taxon>
        <taxon>Arthropoda</taxon>
        <taxon>Hexapoda</taxon>
        <taxon>Insecta</taxon>
        <taxon>Pterygota</taxon>
        <taxon>Neoptera</taxon>
        <taxon>Endopterygota</taxon>
        <taxon>Diptera</taxon>
        <taxon>Brachycera</taxon>
        <taxon>Muscomorpha</taxon>
        <taxon>Ephydroidea</taxon>
        <taxon>Drosophilidae</taxon>
        <taxon>Drosophila</taxon>
        <taxon>Sophophora</taxon>
    </lineage>
</organism>
<reference key="1">
    <citation type="journal article" date="2000" name="Science">
        <title>The genome sequence of Drosophila melanogaster.</title>
        <authorList>
            <person name="Adams M.D."/>
            <person name="Celniker S.E."/>
            <person name="Holt R.A."/>
            <person name="Evans C.A."/>
            <person name="Gocayne J.D."/>
            <person name="Amanatides P.G."/>
            <person name="Scherer S.E."/>
            <person name="Li P.W."/>
            <person name="Hoskins R.A."/>
            <person name="Galle R.F."/>
            <person name="George R.A."/>
            <person name="Lewis S.E."/>
            <person name="Richards S."/>
            <person name="Ashburner M."/>
            <person name="Henderson S.N."/>
            <person name="Sutton G.G."/>
            <person name="Wortman J.R."/>
            <person name="Yandell M.D."/>
            <person name="Zhang Q."/>
            <person name="Chen L.X."/>
            <person name="Brandon R.C."/>
            <person name="Rogers Y.-H.C."/>
            <person name="Blazej R.G."/>
            <person name="Champe M."/>
            <person name="Pfeiffer B.D."/>
            <person name="Wan K.H."/>
            <person name="Doyle C."/>
            <person name="Baxter E.G."/>
            <person name="Helt G."/>
            <person name="Nelson C.R."/>
            <person name="Miklos G.L.G."/>
            <person name="Abril J.F."/>
            <person name="Agbayani A."/>
            <person name="An H.-J."/>
            <person name="Andrews-Pfannkoch C."/>
            <person name="Baldwin D."/>
            <person name="Ballew R.M."/>
            <person name="Basu A."/>
            <person name="Baxendale J."/>
            <person name="Bayraktaroglu L."/>
            <person name="Beasley E.M."/>
            <person name="Beeson K.Y."/>
            <person name="Benos P.V."/>
            <person name="Berman B.P."/>
            <person name="Bhandari D."/>
            <person name="Bolshakov S."/>
            <person name="Borkova D."/>
            <person name="Botchan M.R."/>
            <person name="Bouck J."/>
            <person name="Brokstein P."/>
            <person name="Brottier P."/>
            <person name="Burtis K.C."/>
            <person name="Busam D.A."/>
            <person name="Butler H."/>
            <person name="Cadieu E."/>
            <person name="Center A."/>
            <person name="Chandra I."/>
            <person name="Cherry J.M."/>
            <person name="Cawley S."/>
            <person name="Dahlke C."/>
            <person name="Davenport L.B."/>
            <person name="Davies P."/>
            <person name="de Pablos B."/>
            <person name="Delcher A."/>
            <person name="Deng Z."/>
            <person name="Mays A.D."/>
            <person name="Dew I."/>
            <person name="Dietz S.M."/>
            <person name="Dodson K."/>
            <person name="Doup L.E."/>
            <person name="Downes M."/>
            <person name="Dugan-Rocha S."/>
            <person name="Dunkov B.C."/>
            <person name="Dunn P."/>
            <person name="Durbin K.J."/>
            <person name="Evangelista C.C."/>
            <person name="Ferraz C."/>
            <person name="Ferriera S."/>
            <person name="Fleischmann W."/>
            <person name="Fosler C."/>
            <person name="Gabrielian A.E."/>
            <person name="Garg N.S."/>
            <person name="Gelbart W.M."/>
            <person name="Glasser K."/>
            <person name="Glodek A."/>
            <person name="Gong F."/>
            <person name="Gorrell J.H."/>
            <person name="Gu Z."/>
            <person name="Guan P."/>
            <person name="Harris M."/>
            <person name="Harris N.L."/>
            <person name="Harvey D.A."/>
            <person name="Heiman T.J."/>
            <person name="Hernandez J.R."/>
            <person name="Houck J."/>
            <person name="Hostin D."/>
            <person name="Houston K.A."/>
            <person name="Howland T.J."/>
            <person name="Wei M.-H."/>
            <person name="Ibegwam C."/>
            <person name="Jalali M."/>
            <person name="Kalush F."/>
            <person name="Karpen G.H."/>
            <person name="Ke Z."/>
            <person name="Kennison J.A."/>
            <person name="Ketchum K.A."/>
            <person name="Kimmel B.E."/>
            <person name="Kodira C.D."/>
            <person name="Kraft C.L."/>
            <person name="Kravitz S."/>
            <person name="Kulp D."/>
            <person name="Lai Z."/>
            <person name="Lasko P."/>
            <person name="Lei Y."/>
            <person name="Levitsky A.A."/>
            <person name="Li J.H."/>
            <person name="Li Z."/>
            <person name="Liang Y."/>
            <person name="Lin X."/>
            <person name="Liu X."/>
            <person name="Mattei B."/>
            <person name="McIntosh T.C."/>
            <person name="McLeod M.P."/>
            <person name="McPherson D."/>
            <person name="Merkulov G."/>
            <person name="Milshina N.V."/>
            <person name="Mobarry C."/>
            <person name="Morris J."/>
            <person name="Moshrefi A."/>
            <person name="Mount S.M."/>
            <person name="Moy M."/>
            <person name="Murphy B."/>
            <person name="Murphy L."/>
            <person name="Muzny D.M."/>
            <person name="Nelson D.L."/>
            <person name="Nelson D.R."/>
            <person name="Nelson K.A."/>
            <person name="Nixon K."/>
            <person name="Nusskern D.R."/>
            <person name="Pacleb J.M."/>
            <person name="Palazzolo M."/>
            <person name="Pittman G.S."/>
            <person name="Pan S."/>
            <person name="Pollard J."/>
            <person name="Puri V."/>
            <person name="Reese M.G."/>
            <person name="Reinert K."/>
            <person name="Remington K."/>
            <person name="Saunders R.D.C."/>
            <person name="Scheeler F."/>
            <person name="Shen H."/>
            <person name="Shue B.C."/>
            <person name="Siden-Kiamos I."/>
            <person name="Simpson M."/>
            <person name="Skupski M.P."/>
            <person name="Smith T.J."/>
            <person name="Spier E."/>
            <person name="Spradling A.C."/>
            <person name="Stapleton M."/>
            <person name="Strong R."/>
            <person name="Sun E."/>
            <person name="Svirskas R."/>
            <person name="Tector C."/>
            <person name="Turner R."/>
            <person name="Venter E."/>
            <person name="Wang A.H."/>
            <person name="Wang X."/>
            <person name="Wang Z.-Y."/>
            <person name="Wassarman D.A."/>
            <person name="Weinstock G.M."/>
            <person name="Weissenbach J."/>
            <person name="Williams S.M."/>
            <person name="Woodage T."/>
            <person name="Worley K.C."/>
            <person name="Wu D."/>
            <person name="Yang S."/>
            <person name="Yao Q.A."/>
            <person name="Ye J."/>
            <person name="Yeh R.-F."/>
            <person name="Zaveri J.S."/>
            <person name="Zhan M."/>
            <person name="Zhang G."/>
            <person name="Zhao Q."/>
            <person name="Zheng L."/>
            <person name="Zheng X.H."/>
            <person name="Zhong F.N."/>
            <person name="Zhong W."/>
            <person name="Zhou X."/>
            <person name="Zhu S.C."/>
            <person name="Zhu X."/>
            <person name="Smith H.O."/>
            <person name="Gibbs R.A."/>
            <person name="Myers E.W."/>
            <person name="Rubin G.M."/>
            <person name="Venter J.C."/>
        </authorList>
    </citation>
    <scope>NUCLEOTIDE SEQUENCE [LARGE SCALE GENOMIC DNA]</scope>
    <source>
        <strain>Berkeley</strain>
    </source>
</reference>
<reference key="2">
    <citation type="journal article" date="2002" name="Genome Biol.">
        <title>Annotation of the Drosophila melanogaster euchromatic genome: a systematic review.</title>
        <authorList>
            <person name="Misra S."/>
            <person name="Crosby M.A."/>
            <person name="Mungall C.J."/>
            <person name="Matthews B.B."/>
            <person name="Campbell K.S."/>
            <person name="Hradecky P."/>
            <person name="Huang Y."/>
            <person name="Kaminker J.S."/>
            <person name="Millburn G.H."/>
            <person name="Prochnik S.E."/>
            <person name="Smith C.D."/>
            <person name="Tupy J.L."/>
            <person name="Whitfield E.J."/>
            <person name="Bayraktaroglu L."/>
            <person name="Berman B.P."/>
            <person name="Bettencourt B.R."/>
            <person name="Celniker S.E."/>
            <person name="de Grey A.D.N.J."/>
            <person name="Drysdale R.A."/>
            <person name="Harris N.L."/>
            <person name="Richter J."/>
            <person name="Russo S."/>
            <person name="Schroeder A.J."/>
            <person name="Shu S.Q."/>
            <person name="Stapleton M."/>
            <person name="Yamada C."/>
            <person name="Ashburner M."/>
            <person name="Gelbart W.M."/>
            <person name="Rubin G.M."/>
            <person name="Lewis S.E."/>
        </authorList>
    </citation>
    <scope>GENOME REANNOTATION</scope>
    <source>
        <strain>Berkeley</strain>
    </source>
</reference>
<reference key="3">
    <citation type="journal article" date="2002" name="Genome Biol.">
        <title>A Drosophila full-length cDNA resource.</title>
        <authorList>
            <person name="Stapleton M."/>
            <person name="Carlson J.W."/>
            <person name="Brokstein P."/>
            <person name="Yu C."/>
            <person name="Champe M."/>
            <person name="George R.A."/>
            <person name="Guarin H."/>
            <person name="Kronmiller B."/>
            <person name="Pacleb J.M."/>
            <person name="Park S."/>
            <person name="Wan K.H."/>
            <person name="Rubin G.M."/>
            <person name="Celniker S.E."/>
        </authorList>
    </citation>
    <scope>NUCLEOTIDE SEQUENCE [LARGE SCALE MRNA]</scope>
    <source>
        <strain>Berkeley</strain>
        <tissue>Embryo</tissue>
    </source>
</reference>
<reference key="4">
    <citation type="journal article" date="2017" name="PLoS ONE">
        <title>A proteomics approach to identify targets of the ubiquitin-like molecule Urm1 in Drosophila melanogaster.</title>
        <authorList>
            <person name="Khoshnood B."/>
            <person name="Dacklin I."/>
            <person name="Grabbe C."/>
        </authorList>
    </citation>
    <scope>URMYLATION</scope>
    <scope>IDENTIFICATION BY MASS SPECTROMETRY</scope>
</reference>
<protein>
    <recommendedName>
        <fullName evidence="1">Probable cytosolic iron-sulfur protein assembly protein Ciao1</fullName>
    </recommendedName>
</protein>
<sequence>MGRLILEHTLQGHKGRIWGVAWHPKGNVFASCGEDKAIRIWSLTGNTWSTKTILSDGHKRTIREIRWSPCGQYLASASFDATTAIWSKSSGEFECNATLEGHENEVKSVSWSRSGGLLATCSRDKSVWIWEVAGDDEFECAAVLNPHTQDVKRVVWHPTKDILASASYDNTIKMFAEEPIDNDWDCTATLTSHTSTVWGIDFDADGERLVSCSDDTTIKIWRAYHPGNTAGVATPDQQTVWKCVCTVSGQHSRAIYDVSWCKLTGLIATACGDDGIRIFKESSDSKPDEPTFEQITAEEGAHDQDVNSVQWNPVVAGQLISCSDDGTIKIWKVTE</sequence>
<gene>
    <name evidence="1" type="primary">Ciao1</name>
    <name type="ORF">CG12797</name>
</gene>
<feature type="chain" id="PRO_0000382486" description="Probable cytosolic iron-sulfur protein assembly protein Ciao1">
    <location>
        <begin position="1"/>
        <end position="335"/>
    </location>
</feature>
<feature type="repeat" description="WD 1">
    <location>
        <begin position="12"/>
        <end position="51"/>
    </location>
</feature>
<feature type="repeat" description="WD 2">
    <location>
        <begin position="57"/>
        <end position="96"/>
    </location>
</feature>
<feature type="repeat" description="WD 3">
    <location>
        <begin position="101"/>
        <end position="140"/>
    </location>
</feature>
<feature type="repeat" description="WD 4">
    <location>
        <begin position="146"/>
        <end position="185"/>
    </location>
</feature>
<feature type="repeat" description="WD 5">
    <location>
        <begin position="192"/>
        <end position="231"/>
    </location>
</feature>
<feature type="repeat" description="WD 6">
    <location>
        <begin position="250"/>
        <end position="289"/>
    </location>
</feature>
<feature type="repeat" description="WD 7">
    <location>
        <begin position="301"/>
        <end position="335"/>
    </location>
</feature>
<feature type="strand" evidence="4">
    <location>
        <begin position="3"/>
        <end position="10"/>
    </location>
</feature>
<feature type="strand" evidence="4">
    <location>
        <begin position="13"/>
        <end position="15"/>
    </location>
</feature>
<feature type="strand" evidence="4">
    <location>
        <begin position="17"/>
        <end position="22"/>
    </location>
</feature>
<feature type="strand" evidence="4">
    <location>
        <begin position="26"/>
        <end position="33"/>
    </location>
</feature>
<feature type="strand" evidence="4">
    <location>
        <begin position="38"/>
        <end position="44"/>
    </location>
</feature>
<feature type="strand" evidence="4">
    <location>
        <begin position="47"/>
        <end position="54"/>
    </location>
</feature>
<feature type="strand" evidence="4">
    <location>
        <begin position="62"/>
        <end position="67"/>
    </location>
</feature>
<feature type="strand" evidence="4">
    <location>
        <begin position="71"/>
        <end position="78"/>
    </location>
</feature>
<feature type="strand" evidence="4">
    <location>
        <begin position="83"/>
        <end position="99"/>
    </location>
</feature>
<feature type="strand" evidence="4">
    <location>
        <begin position="106"/>
        <end position="111"/>
    </location>
</feature>
<feature type="strand" evidence="4">
    <location>
        <begin position="117"/>
        <end position="122"/>
    </location>
</feature>
<feature type="strand" evidence="4">
    <location>
        <begin position="127"/>
        <end position="134"/>
    </location>
</feature>
<feature type="strand" evidence="4">
    <location>
        <begin position="137"/>
        <end position="144"/>
    </location>
</feature>
<feature type="strand" evidence="4">
    <location>
        <begin position="151"/>
        <end position="156"/>
    </location>
</feature>
<feature type="strand" evidence="4">
    <location>
        <begin position="158"/>
        <end position="161"/>
    </location>
</feature>
<feature type="strand" evidence="4">
    <location>
        <begin position="163"/>
        <end position="167"/>
    </location>
</feature>
<feature type="strand" evidence="4">
    <location>
        <begin position="170"/>
        <end position="177"/>
    </location>
</feature>
<feature type="turn" evidence="4">
    <location>
        <begin position="179"/>
        <end position="181"/>
    </location>
</feature>
<feature type="strand" evidence="4">
    <location>
        <begin position="184"/>
        <end position="191"/>
    </location>
</feature>
<feature type="strand" evidence="4">
    <location>
        <begin position="197"/>
        <end position="202"/>
    </location>
</feature>
<feature type="strand" evidence="4">
    <location>
        <begin position="206"/>
        <end position="213"/>
    </location>
</feature>
<feature type="strand" evidence="4">
    <location>
        <begin position="218"/>
        <end position="224"/>
    </location>
</feature>
<feature type="strand" evidence="3">
    <location>
        <begin position="235"/>
        <end position="238"/>
    </location>
</feature>
<feature type="strand" evidence="4">
    <location>
        <begin position="240"/>
        <end position="247"/>
    </location>
</feature>
<feature type="strand" evidence="4">
    <location>
        <begin position="255"/>
        <end position="260"/>
    </location>
</feature>
<feature type="turn" evidence="4">
    <location>
        <begin position="262"/>
        <end position="264"/>
    </location>
</feature>
<feature type="strand" evidence="4">
    <location>
        <begin position="267"/>
        <end position="271"/>
    </location>
</feature>
<feature type="strand" evidence="4">
    <location>
        <begin position="276"/>
        <end position="281"/>
    </location>
</feature>
<feature type="strand" evidence="3">
    <location>
        <begin position="287"/>
        <end position="289"/>
    </location>
</feature>
<feature type="strand" evidence="4">
    <location>
        <begin position="292"/>
        <end position="298"/>
    </location>
</feature>
<feature type="strand" evidence="4">
    <location>
        <begin position="301"/>
        <end position="304"/>
    </location>
</feature>
<feature type="strand" evidence="4">
    <location>
        <begin position="306"/>
        <end position="311"/>
    </location>
</feature>
<feature type="strand" evidence="4">
    <location>
        <begin position="313"/>
        <end position="315"/>
    </location>
</feature>
<feature type="strand" evidence="4">
    <location>
        <begin position="318"/>
        <end position="323"/>
    </location>
</feature>
<feature type="strand" evidence="4">
    <location>
        <begin position="328"/>
        <end position="334"/>
    </location>
</feature>
<evidence type="ECO:0000255" key="1">
    <source>
        <dbReference type="HAMAP-Rule" id="MF_03037"/>
    </source>
</evidence>
<evidence type="ECO:0000269" key="2">
    <source>
    </source>
</evidence>
<evidence type="ECO:0007829" key="3">
    <source>
        <dbReference type="PDB" id="6TBL"/>
    </source>
</evidence>
<evidence type="ECO:0007829" key="4">
    <source>
        <dbReference type="PDB" id="6TBN"/>
    </source>
</evidence>
<keyword id="KW-0002">3D-structure</keyword>
<keyword id="KW-1185">Reference proteome</keyword>
<keyword id="KW-0677">Repeat</keyword>
<keyword id="KW-0832">Ubl conjugation</keyword>
<keyword id="KW-0853">WD repeat</keyword>
<dbReference type="EMBL" id="AE013599">
    <property type="protein sequence ID" value="AAF58195.1"/>
    <property type="molecule type" value="Genomic_DNA"/>
</dbReference>
<dbReference type="EMBL" id="AY061388">
    <property type="protein sequence ID" value="AAL28936.1"/>
    <property type="molecule type" value="mRNA"/>
</dbReference>
<dbReference type="RefSeq" id="NP_610996.1">
    <property type="nucleotide sequence ID" value="NM_137152.4"/>
</dbReference>
<dbReference type="PDB" id="6TBL">
    <property type="method" value="X-ray"/>
    <property type="resolution" value="2.65 A"/>
    <property type="chains" value="E/F=2-335"/>
</dbReference>
<dbReference type="PDB" id="6TBN">
    <property type="method" value="X-ray"/>
    <property type="resolution" value="2.00 A"/>
    <property type="chains" value="B=2-335"/>
</dbReference>
<dbReference type="PDB" id="6TC0">
    <property type="method" value="X-ray"/>
    <property type="resolution" value="3.60 A"/>
    <property type="chains" value="A/D=2-335"/>
</dbReference>
<dbReference type="PDBsum" id="6TBL"/>
<dbReference type="PDBsum" id="6TBN"/>
<dbReference type="PDBsum" id="6TC0"/>
<dbReference type="SMR" id="Q7K1Y4"/>
<dbReference type="BioGRID" id="62400">
    <property type="interactions" value="4"/>
</dbReference>
<dbReference type="FunCoup" id="Q7K1Y4">
    <property type="interactions" value="685"/>
</dbReference>
<dbReference type="IntAct" id="Q7K1Y4">
    <property type="interactions" value="2"/>
</dbReference>
<dbReference type="STRING" id="7227.FBpp0086590"/>
<dbReference type="PaxDb" id="7227-FBpp0086590"/>
<dbReference type="EnsemblMetazoa" id="FBtr0087460">
    <property type="protein sequence ID" value="FBpp0086590"/>
    <property type="gene ID" value="FBgn0033972"/>
</dbReference>
<dbReference type="GeneID" id="36655"/>
<dbReference type="KEGG" id="dme:Dmel_CG12797"/>
<dbReference type="UCSC" id="CG12797-RA">
    <property type="organism name" value="d. melanogaster"/>
</dbReference>
<dbReference type="AGR" id="FB:FBgn0033972"/>
<dbReference type="CTD" id="9391"/>
<dbReference type="FlyBase" id="FBgn0033972">
    <property type="gene designation" value="Ciao1"/>
</dbReference>
<dbReference type="VEuPathDB" id="VectorBase:FBgn0033972"/>
<dbReference type="eggNOG" id="KOG0645">
    <property type="taxonomic scope" value="Eukaryota"/>
</dbReference>
<dbReference type="GeneTree" id="ENSGT00940000158670"/>
<dbReference type="HOGENOM" id="CLU_000288_57_8_1"/>
<dbReference type="InParanoid" id="Q7K1Y4"/>
<dbReference type="OMA" id="IREIRWS"/>
<dbReference type="OrthoDB" id="284782at2759"/>
<dbReference type="PhylomeDB" id="Q7K1Y4"/>
<dbReference type="BioGRID-ORCS" id="36655">
    <property type="hits" value="0 hits in 1 CRISPR screen"/>
</dbReference>
<dbReference type="GenomeRNAi" id="36655"/>
<dbReference type="PRO" id="PR:Q7K1Y4"/>
<dbReference type="Proteomes" id="UP000000803">
    <property type="component" value="Chromosome 2R"/>
</dbReference>
<dbReference type="Bgee" id="FBgn0033972">
    <property type="expression patterns" value="Expressed in crop (Drosophila) and 144 other cell types or tissues"/>
</dbReference>
<dbReference type="GO" id="GO:0097361">
    <property type="term" value="C:cytosolic [4Fe-4S] assembly targeting complex"/>
    <property type="evidence" value="ECO:0000314"/>
    <property type="project" value="FlyBase"/>
</dbReference>
<dbReference type="GO" id="GO:1902695">
    <property type="term" value="C:metallochaperone complex"/>
    <property type="evidence" value="ECO:0000314"/>
    <property type="project" value="FlyBase"/>
</dbReference>
<dbReference type="GO" id="GO:0016226">
    <property type="term" value="P:iron-sulfur cluster assembly"/>
    <property type="evidence" value="ECO:0000318"/>
    <property type="project" value="GO_Central"/>
</dbReference>
<dbReference type="GO" id="GO:0051604">
    <property type="term" value="P:protein maturation"/>
    <property type="evidence" value="ECO:0000250"/>
    <property type="project" value="UniProtKB"/>
</dbReference>
<dbReference type="CDD" id="cd00200">
    <property type="entry name" value="WD40"/>
    <property type="match status" value="1"/>
</dbReference>
<dbReference type="FunFam" id="2.130.10.10:FF:000136">
    <property type="entry name" value="Probable cytosolic iron-sulfur protein assembly protein CIAO1"/>
    <property type="match status" value="1"/>
</dbReference>
<dbReference type="Gene3D" id="2.130.10.10">
    <property type="entry name" value="YVTN repeat-like/Quinoprotein amine dehydrogenase"/>
    <property type="match status" value="1"/>
</dbReference>
<dbReference type="HAMAP" id="MF_03037">
    <property type="entry name" value="ciao1"/>
    <property type="match status" value="1"/>
</dbReference>
<dbReference type="InterPro" id="IPR028608">
    <property type="entry name" value="CIAO1/Cia1"/>
</dbReference>
<dbReference type="InterPro" id="IPR020472">
    <property type="entry name" value="G-protein_beta_WD-40_rep"/>
</dbReference>
<dbReference type="InterPro" id="IPR015943">
    <property type="entry name" value="WD40/YVTN_repeat-like_dom_sf"/>
</dbReference>
<dbReference type="InterPro" id="IPR019775">
    <property type="entry name" value="WD40_repeat_CS"/>
</dbReference>
<dbReference type="InterPro" id="IPR036322">
    <property type="entry name" value="WD40_repeat_dom_sf"/>
</dbReference>
<dbReference type="InterPro" id="IPR001680">
    <property type="entry name" value="WD40_rpt"/>
</dbReference>
<dbReference type="PANTHER" id="PTHR19920:SF0">
    <property type="entry name" value="CYTOSOLIC IRON-SULFUR PROTEIN ASSEMBLY PROTEIN CIAO1-RELATED"/>
    <property type="match status" value="1"/>
</dbReference>
<dbReference type="PANTHER" id="PTHR19920">
    <property type="entry name" value="WD40 PROTEIN CIAO1"/>
    <property type="match status" value="1"/>
</dbReference>
<dbReference type="Pfam" id="PF00400">
    <property type="entry name" value="WD40"/>
    <property type="match status" value="7"/>
</dbReference>
<dbReference type="PRINTS" id="PR00320">
    <property type="entry name" value="GPROTEINBRPT"/>
</dbReference>
<dbReference type="SMART" id="SM00320">
    <property type="entry name" value="WD40"/>
    <property type="match status" value="7"/>
</dbReference>
<dbReference type="SUPFAM" id="SSF50978">
    <property type="entry name" value="WD40 repeat-like"/>
    <property type="match status" value="1"/>
</dbReference>
<dbReference type="PROSITE" id="PS00678">
    <property type="entry name" value="WD_REPEATS_1"/>
    <property type="match status" value="1"/>
</dbReference>
<dbReference type="PROSITE" id="PS50082">
    <property type="entry name" value="WD_REPEATS_2"/>
    <property type="match status" value="6"/>
</dbReference>
<dbReference type="PROSITE" id="PS50294">
    <property type="entry name" value="WD_REPEATS_REGION"/>
    <property type="match status" value="1"/>
</dbReference>
<accession>Q7K1Y4</accession>
<name>CIAO1_DROME</name>
<proteinExistence type="evidence at protein level"/>